<reference key="1">
    <citation type="journal article" date="1998" name="Nature">
        <title>The complete genome of the hyperthermophilic bacterium Aquifex aeolicus.</title>
        <authorList>
            <person name="Deckert G."/>
            <person name="Warren P.V."/>
            <person name="Gaasterland T."/>
            <person name="Young W.G."/>
            <person name="Lenox A.L."/>
            <person name="Graham D.E."/>
            <person name="Overbeek R."/>
            <person name="Snead M.A."/>
            <person name="Keller M."/>
            <person name="Aujay M."/>
            <person name="Huber R."/>
            <person name="Feldman R.A."/>
            <person name="Short J.M."/>
            <person name="Olsen G.J."/>
            <person name="Swanson R.V."/>
        </authorList>
    </citation>
    <scope>NUCLEOTIDE SEQUENCE [LARGE SCALE GENOMIC DNA]</scope>
    <source>
        <strain>VF5</strain>
    </source>
</reference>
<protein>
    <recommendedName>
        <fullName>Flagellar hook-associated protein 2</fullName>
        <shortName>HAP2</shortName>
    </recommendedName>
    <alternativeName>
        <fullName>Filament cap protein</fullName>
    </alternativeName>
    <alternativeName>
        <fullName>Flagellar cap protein</fullName>
    </alternativeName>
</protein>
<sequence length="441" mass="49461">MAGELYFSGVTGAYDWGSVLDNIMAVKSIPIQKLQQKKQLINQKLQILGEFSQKLSDLKNLIENFNLESALKTKKADVSDSDVISVSVSENAPEISFSVNVLNTASKEILVYDAGFNSLDETIGSDGSFTLRYYTSPTDYVEYTIDYSLIDTLKDIVNKINETQDYVKASIYYDGNKYKLMLAETSEENSTVETAPDLSTKAIHLLGTLPHQFGNNVLIQQAKNARIQIGSGDVIESAGNTFENVIEGVSISAKRAGTSEVSISQDFSKIREFLNNFVKSYNEVVSQVKSLTLGENAPFRGENTIMNVKYGLSDTLTPLMELGLIEYKEDGTISLSGNLESVINEKPDEFKLKMTQFLESAKAVAKVNYEAFEDFKEYLNDQAERIDENIRLLSQRLVQEEQILKRQFAQLEDFMNYANQIRERLKQFMVSISEMNGGNNK</sequence>
<dbReference type="EMBL" id="AE000657">
    <property type="protein sequence ID" value="AAC07765.1"/>
    <property type="molecule type" value="Genomic_DNA"/>
</dbReference>
<dbReference type="PIR" id="A70472">
    <property type="entry name" value="A70472"/>
</dbReference>
<dbReference type="RefSeq" id="NP_214374.1">
    <property type="nucleotide sequence ID" value="NC_000918.1"/>
</dbReference>
<dbReference type="RefSeq" id="WP_010881310.1">
    <property type="nucleotide sequence ID" value="NC_000918.1"/>
</dbReference>
<dbReference type="SMR" id="O67805"/>
<dbReference type="STRING" id="224324.aq_2001"/>
<dbReference type="EnsemblBacteria" id="AAC07765">
    <property type="protein sequence ID" value="AAC07765"/>
    <property type="gene ID" value="aq_2001"/>
</dbReference>
<dbReference type="KEGG" id="aae:aq_2001"/>
<dbReference type="eggNOG" id="COG1345">
    <property type="taxonomic scope" value="Bacteria"/>
</dbReference>
<dbReference type="HOGENOM" id="CLU_051679_0_0_0"/>
<dbReference type="InParanoid" id="O67805"/>
<dbReference type="OrthoDB" id="9908at2"/>
<dbReference type="Proteomes" id="UP000000798">
    <property type="component" value="Chromosome"/>
</dbReference>
<dbReference type="GO" id="GO:0009421">
    <property type="term" value="C:bacterial-type flagellum filament cap"/>
    <property type="evidence" value="ECO:0000318"/>
    <property type="project" value="GO_Central"/>
</dbReference>
<dbReference type="GO" id="GO:0009424">
    <property type="term" value="C:bacterial-type flagellum hook"/>
    <property type="evidence" value="ECO:0007669"/>
    <property type="project" value="InterPro"/>
</dbReference>
<dbReference type="GO" id="GO:0005576">
    <property type="term" value="C:extracellular region"/>
    <property type="evidence" value="ECO:0007669"/>
    <property type="project" value="UniProtKB-SubCell"/>
</dbReference>
<dbReference type="GO" id="GO:0071973">
    <property type="term" value="P:bacterial-type flagellum-dependent cell motility"/>
    <property type="evidence" value="ECO:0000318"/>
    <property type="project" value="GO_Central"/>
</dbReference>
<dbReference type="GO" id="GO:0007155">
    <property type="term" value="P:cell adhesion"/>
    <property type="evidence" value="ECO:0007669"/>
    <property type="project" value="InterPro"/>
</dbReference>
<dbReference type="InterPro" id="IPR010810">
    <property type="entry name" value="Flagellin_hook_IN_motif"/>
</dbReference>
<dbReference type="InterPro" id="IPR040026">
    <property type="entry name" value="FliD"/>
</dbReference>
<dbReference type="InterPro" id="IPR010809">
    <property type="entry name" value="FliD_C"/>
</dbReference>
<dbReference type="InterPro" id="IPR003481">
    <property type="entry name" value="FliD_N"/>
</dbReference>
<dbReference type="PANTHER" id="PTHR30288">
    <property type="entry name" value="FLAGELLAR CAP/ASSEMBLY PROTEIN FLID"/>
    <property type="match status" value="1"/>
</dbReference>
<dbReference type="PANTHER" id="PTHR30288:SF0">
    <property type="entry name" value="FLAGELLAR HOOK-ASSOCIATED PROTEIN 2"/>
    <property type="match status" value="1"/>
</dbReference>
<dbReference type="Pfam" id="PF07196">
    <property type="entry name" value="Flagellin_IN"/>
    <property type="match status" value="1"/>
</dbReference>
<dbReference type="Pfam" id="PF07195">
    <property type="entry name" value="FliD_C"/>
    <property type="match status" value="1"/>
</dbReference>
<dbReference type="Pfam" id="PF02465">
    <property type="entry name" value="FliD_N"/>
    <property type="match status" value="1"/>
</dbReference>
<name>FLID_AQUAE</name>
<evidence type="ECO:0000250" key="1"/>
<evidence type="ECO:0000255" key="2"/>
<evidence type="ECO:0000305" key="3"/>
<proteinExistence type="inferred from homology"/>
<gene>
    <name type="primary">fliD</name>
    <name type="ordered locus">aq_2001</name>
</gene>
<feature type="chain" id="PRO_0000177012" description="Flagellar hook-associated protein 2">
    <location>
        <begin position="1"/>
        <end position="441"/>
    </location>
</feature>
<feature type="coiled-coil region" evidence="2">
    <location>
        <begin position="376"/>
        <end position="416"/>
    </location>
</feature>
<keyword id="KW-0975">Bacterial flagellum</keyword>
<keyword id="KW-0175">Coiled coil</keyword>
<keyword id="KW-1185">Reference proteome</keyword>
<keyword id="KW-0964">Secreted</keyword>
<organism>
    <name type="scientific">Aquifex aeolicus (strain VF5)</name>
    <dbReference type="NCBI Taxonomy" id="224324"/>
    <lineage>
        <taxon>Bacteria</taxon>
        <taxon>Pseudomonadati</taxon>
        <taxon>Aquificota</taxon>
        <taxon>Aquificia</taxon>
        <taxon>Aquificales</taxon>
        <taxon>Aquificaceae</taxon>
        <taxon>Aquifex</taxon>
    </lineage>
</organism>
<accession>O67805</accession>
<comment type="function">
    <text evidence="1">Required for the morphogenesis and for the elongation of the flagellar filament by facilitating polymerization of the flagellin monomers at the tip of growing filament. Forms a capping structure, which prevents flagellin subunits (transported through the central channel of the flagellum) from leaking out without polymerization at the distal end (By similarity).</text>
</comment>
<comment type="subunit">
    <text evidence="1">Homopentamer.</text>
</comment>
<comment type="subcellular location">
    <subcellularLocation>
        <location>Secreted</location>
    </subcellularLocation>
    <subcellularLocation>
        <location>Bacterial flagellum</location>
    </subcellularLocation>
</comment>
<comment type="similarity">
    <text evidence="3">Belongs to the FliD family.</text>
</comment>